<evidence type="ECO:0000255" key="1">
    <source>
        <dbReference type="HAMAP-Rule" id="MF_01543"/>
    </source>
</evidence>
<dbReference type="EC" id="6.3.4.3" evidence="1"/>
<dbReference type="EMBL" id="CP000113">
    <property type="protein sequence ID" value="ABF87836.1"/>
    <property type="molecule type" value="Genomic_DNA"/>
</dbReference>
<dbReference type="RefSeq" id="WP_011550322.1">
    <property type="nucleotide sequence ID" value="NC_008095.1"/>
</dbReference>
<dbReference type="SMR" id="Q1DFW5"/>
<dbReference type="STRING" id="246197.MXAN_0175"/>
<dbReference type="EnsemblBacteria" id="ABF87836">
    <property type="protein sequence ID" value="ABF87836"/>
    <property type="gene ID" value="MXAN_0175"/>
</dbReference>
<dbReference type="GeneID" id="41357678"/>
<dbReference type="KEGG" id="mxa:MXAN_0175"/>
<dbReference type="eggNOG" id="COG2759">
    <property type="taxonomic scope" value="Bacteria"/>
</dbReference>
<dbReference type="HOGENOM" id="CLU_003601_3_3_7"/>
<dbReference type="OrthoDB" id="9761733at2"/>
<dbReference type="UniPathway" id="UPA00193"/>
<dbReference type="Proteomes" id="UP000002402">
    <property type="component" value="Chromosome"/>
</dbReference>
<dbReference type="GO" id="GO:0005524">
    <property type="term" value="F:ATP binding"/>
    <property type="evidence" value="ECO:0007669"/>
    <property type="project" value="UniProtKB-UniRule"/>
</dbReference>
<dbReference type="GO" id="GO:0004329">
    <property type="term" value="F:formate-tetrahydrofolate ligase activity"/>
    <property type="evidence" value="ECO:0007669"/>
    <property type="project" value="UniProtKB-UniRule"/>
</dbReference>
<dbReference type="GO" id="GO:0035999">
    <property type="term" value="P:tetrahydrofolate interconversion"/>
    <property type="evidence" value="ECO:0007669"/>
    <property type="project" value="UniProtKB-UniRule"/>
</dbReference>
<dbReference type="CDD" id="cd00477">
    <property type="entry name" value="FTHFS"/>
    <property type="match status" value="1"/>
</dbReference>
<dbReference type="FunFam" id="3.10.410.10:FF:000001">
    <property type="entry name" value="Putative formate--tetrahydrofolate ligase"/>
    <property type="match status" value="1"/>
</dbReference>
<dbReference type="Gene3D" id="3.30.1510.10">
    <property type="entry name" value="Domain 2, N(10)-formyltetrahydrofolate synthetase"/>
    <property type="match status" value="1"/>
</dbReference>
<dbReference type="Gene3D" id="3.10.410.10">
    <property type="entry name" value="Formyltetrahydrofolate synthetase, domain 3"/>
    <property type="match status" value="1"/>
</dbReference>
<dbReference type="Gene3D" id="3.40.50.300">
    <property type="entry name" value="P-loop containing nucleotide triphosphate hydrolases"/>
    <property type="match status" value="1"/>
</dbReference>
<dbReference type="HAMAP" id="MF_01543">
    <property type="entry name" value="FTHFS"/>
    <property type="match status" value="1"/>
</dbReference>
<dbReference type="InterPro" id="IPR000559">
    <property type="entry name" value="Formate_THF_ligase"/>
</dbReference>
<dbReference type="InterPro" id="IPR020628">
    <property type="entry name" value="Formate_THF_ligase_CS"/>
</dbReference>
<dbReference type="InterPro" id="IPR027417">
    <property type="entry name" value="P-loop_NTPase"/>
</dbReference>
<dbReference type="NCBIfam" id="NF010030">
    <property type="entry name" value="PRK13505.1"/>
    <property type="match status" value="1"/>
</dbReference>
<dbReference type="Pfam" id="PF01268">
    <property type="entry name" value="FTHFS"/>
    <property type="match status" value="1"/>
</dbReference>
<dbReference type="SUPFAM" id="SSF52540">
    <property type="entry name" value="P-loop containing nucleoside triphosphate hydrolases"/>
    <property type="match status" value="1"/>
</dbReference>
<dbReference type="PROSITE" id="PS00722">
    <property type="entry name" value="FTHFS_2"/>
    <property type="match status" value="1"/>
</dbReference>
<comment type="catalytic activity">
    <reaction evidence="1">
        <text>(6S)-5,6,7,8-tetrahydrofolate + formate + ATP = (6R)-10-formyltetrahydrofolate + ADP + phosphate</text>
        <dbReference type="Rhea" id="RHEA:20221"/>
        <dbReference type="ChEBI" id="CHEBI:15740"/>
        <dbReference type="ChEBI" id="CHEBI:30616"/>
        <dbReference type="ChEBI" id="CHEBI:43474"/>
        <dbReference type="ChEBI" id="CHEBI:57453"/>
        <dbReference type="ChEBI" id="CHEBI:195366"/>
        <dbReference type="ChEBI" id="CHEBI:456216"/>
        <dbReference type="EC" id="6.3.4.3"/>
    </reaction>
</comment>
<comment type="pathway">
    <text evidence="1">One-carbon metabolism; tetrahydrofolate interconversion.</text>
</comment>
<comment type="similarity">
    <text evidence="1">Belongs to the formate--tetrahydrofolate ligase family.</text>
</comment>
<feature type="chain" id="PRO_0000293048" description="Formate--tetrahydrofolate ligase">
    <location>
        <begin position="1"/>
        <end position="551"/>
    </location>
</feature>
<feature type="binding site" evidence="1">
    <location>
        <begin position="54"/>
        <end position="61"/>
    </location>
    <ligand>
        <name>ATP</name>
        <dbReference type="ChEBI" id="CHEBI:30616"/>
    </ligand>
</feature>
<keyword id="KW-0067">ATP-binding</keyword>
<keyword id="KW-0436">Ligase</keyword>
<keyword id="KW-0547">Nucleotide-binding</keyword>
<keyword id="KW-0554">One-carbon metabolism</keyword>
<keyword id="KW-1185">Reference proteome</keyword>
<proteinExistence type="inferred from homology"/>
<gene>
    <name evidence="1" type="primary">fhs</name>
    <name type="ordered locus">MXAN_0175</name>
</gene>
<reference key="1">
    <citation type="journal article" date="2006" name="Proc. Natl. Acad. Sci. U.S.A.">
        <title>Evolution of sensory complexity recorded in a myxobacterial genome.</title>
        <authorList>
            <person name="Goldman B.S."/>
            <person name="Nierman W.C."/>
            <person name="Kaiser D."/>
            <person name="Slater S.C."/>
            <person name="Durkin A.S."/>
            <person name="Eisen J.A."/>
            <person name="Ronning C.M."/>
            <person name="Barbazuk W.B."/>
            <person name="Blanchard M."/>
            <person name="Field C."/>
            <person name="Halling C."/>
            <person name="Hinkle G."/>
            <person name="Iartchuk O."/>
            <person name="Kim H.S."/>
            <person name="Mackenzie C."/>
            <person name="Madupu R."/>
            <person name="Miller N."/>
            <person name="Shvartsbeyn A."/>
            <person name="Sullivan S.A."/>
            <person name="Vaudin M."/>
            <person name="Wiegand R."/>
            <person name="Kaplan H.B."/>
        </authorList>
    </citation>
    <scope>NUCLEOTIDE SEQUENCE [LARGE SCALE GENOMIC DNA]</scope>
    <source>
        <strain>DK1622</strain>
    </source>
</reference>
<accession>Q1DFW5</accession>
<protein>
    <recommendedName>
        <fullName evidence="1">Formate--tetrahydrofolate ligase</fullName>
        <ecNumber evidence="1">6.3.4.3</ecNumber>
    </recommendedName>
    <alternativeName>
        <fullName evidence="1">Formyltetrahydrofolate synthetase</fullName>
        <shortName evidence="1">FHS</shortName>
        <shortName evidence="1">FTHFS</shortName>
    </alternativeName>
</protein>
<organism>
    <name type="scientific">Myxococcus xanthus (strain DK1622)</name>
    <dbReference type="NCBI Taxonomy" id="246197"/>
    <lineage>
        <taxon>Bacteria</taxon>
        <taxon>Pseudomonadati</taxon>
        <taxon>Myxococcota</taxon>
        <taxon>Myxococcia</taxon>
        <taxon>Myxococcales</taxon>
        <taxon>Cystobacterineae</taxon>
        <taxon>Myxococcaceae</taxon>
        <taxon>Myxococcus</taxon>
    </lineage>
</organism>
<name>FTHS_MYXXD</name>
<sequence>MTLRAMTDVGAELGLSPEDVLPWGTHRAKVSLDALGKRGGRQGRLVLVSAINPTPPGEGKTTMSVALAMGLRKRGRRAVAALREPSLGPVFGVKGGGTGGGQASLEPAADINLHFTGDLHAITSANNLLSALVDNAVFYGQPVALDATRVRWRRALDMNDRFLRNVIVGLGGKAQGVPREDHFDITAASEVMAILALAEGLKDLEARLGRVIIGHTRDGQPVRARDVDAAASMVALLKDALMPNLAQTREGGPALVHAGPFANIAHGCSSVMGTRMGLAYADEVITEAGFGFDLGAEKFLDIKCRGSGLWPRGVVLVVTLRALKHHGGASPARVAEPDREALVRGFAHLEKHLESVAAFGLPAVLCVNRFPQDTESELEELRAFGKARGVETAVCDGFSRGGDGSLELADCVLEMLDGTDAAPPQPRFLYDVAQTPEEKVAAIARTVYGADDVAFTASAKKDLDAIRELGGAGLPVCMAKTHLSLSDDPTKLGRPRGFTLTVREVRLSAGAGFMVALTGEILTMPGLPREPAARRVTVHDDGRVTGLMQGE</sequence>